<keyword id="KW-0238">DNA-binding</keyword>
<keyword id="KW-1185">Reference proteome</keyword>
<keyword id="KW-1277">Toxin-antitoxin system</keyword>
<comment type="function">
    <text evidence="1">Antitoxin component of a type II toxin-antitoxin (TA) system. Labile antitoxin that binds to cognate MazF6 toxin and counteracts its endoribonuclease activity.</text>
</comment>
<comment type="subunit">
    <text evidence="1">Probably forms a complex with cognate toxin MazF6 which neutralizes the toxin.</text>
</comment>
<gene>
    <name type="primary">mazE6</name>
    <name type="ordered locus">MT2047</name>
</gene>
<sequence length="82" mass="9290">MKTAISLPDETFDRVSRRASELGMSRSEFFTKAAQRYLHELDAQLLTGQIDRALESIHGTDEAEALAVANAYRVLETMDDEW</sequence>
<proteinExistence type="inferred from homology"/>
<feature type="chain" id="PRO_0000427873" description="Antitoxin MazE6">
    <location>
        <begin position="1"/>
        <end position="82"/>
    </location>
</feature>
<organism>
    <name type="scientific">Mycobacterium tuberculosis (strain CDC 1551 / Oshkosh)</name>
    <dbReference type="NCBI Taxonomy" id="83331"/>
    <lineage>
        <taxon>Bacteria</taxon>
        <taxon>Bacillati</taxon>
        <taxon>Actinomycetota</taxon>
        <taxon>Actinomycetes</taxon>
        <taxon>Mycobacteriales</taxon>
        <taxon>Mycobacteriaceae</taxon>
        <taxon>Mycobacterium</taxon>
        <taxon>Mycobacterium tuberculosis complex</taxon>
    </lineage>
</organism>
<accession>P9WJ86</accession>
<accession>F2GGA0</accession>
<accession>P0CL59</accession>
<accession>Q8VJS6</accession>
<reference key="1">
    <citation type="journal article" date="2002" name="J. Bacteriol.">
        <title>Whole-genome comparison of Mycobacterium tuberculosis clinical and laboratory strains.</title>
        <authorList>
            <person name="Fleischmann R.D."/>
            <person name="Alland D."/>
            <person name="Eisen J.A."/>
            <person name="Carpenter L."/>
            <person name="White O."/>
            <person name="Peterson J.D."/>
            <person name="DeBoy R.T."/>
            <person name="Dodson R.J."/>
            <person name="Gwinn M.L."/>
            <person name="Haft D.H."/>
            <person name="Hickey E.K."/>
            <person name="Kolonay J.F."/>
            <person name="Nelson W.C."/>
            <person name="Umayam L.A."/>
            <person name="Ermolaeva M.D."/>
            <person name="Salzberg S.L."/>
            <person name="Delcher A."/>
            <person name="Utterback T.R."/>
            <person name="Weidman J.F."/>
            <person name="Khouri H.M."/>
            <person name="Gill J."/>
            <person name="Mikula A."/>
            <person name="Bishai W."/>
            <person name="Jacobs W.R. Jr."/>
            <person name="Venter J.C."/>
            <person name="Fraser C.M."/>
        </authorList>
    </citation>
    <scope>NUCLEOTIDE SEQUENCE [LARGE SCALE GENOMIC DNA]</scope>
    <source>
        <strain>CDC 1551 / Oshkosh</strain>
    </source>
</reference>
<name>MAZE6_MYCTO</name>
<evidence type="ECO:0000250" key="1">
    <source>
        <dbReference type="UniProtKB" id="P9WJ87"/>
    </source>
</evidence>
<dbReference type="EMBL" id="AE000516">
    <property type="protein sequence ID" value="AAK46324.1"/>
    <property type="molecule type" value="Genomic_DNA"/>
</dbReference>
<dbReference type="RefSeq" id="WP_003410014.1">
    <property type="nucleotide sequence ID" value="NZ_KK341227.1"/>
</dbReference>
<dbReference type="SMR" id="P9WJ86"/>
<dbReference type="KEGG" id="mtc:MT2047"/>
<dbReference type="PATRIC" id="fig|83331.31.peg.2204"/>
<dbReference type="HOGENOM" id="CLU_179926_2_0_11"/>
<dbReference type="Proteomes" id="UP000001020">
    <property type="component" value="Chromosome"/>
</dbReference>
<dbReference type="GO" id="GO:0003677">
    <property type="term" value="F:DNA binding"/>
    <property type="evidence" value="ECO:0007669"/>
    <property type="project" value="UniProtKB-KW"/>
</dbReference>
<dbReference type="GO" id="GO:0006355">
    <property type="term" value="P:regulation of DNA-templated transcription"/>
    <property type="evidence" value="ECO:0007669"/>
    <property type="project" value="InterPro"/>
</dbReference>
<dbReference type="Gene3D" id="1.10.1220.10">
    <property type="entry name" value="Met repressor-like"/>
    <property type="match status" value="1"/>
</dbReference>
<dbReference type="InterPro" id="IPR013321">
    <property type="entry name" value="Arc_rbn_hlx_hlx"/>
</dbReference>
<dbReference type="InterPro" id="IPR002145">
    <property type="entry name" value="CopG"/>
</dbReference>
<dbReference type="InterPro" id="IPR010985">
    <property type="entry name" value="Ribbon_hlx_hlx"/>
</dbReference>
<dbReference type="Pfam" id="PF01402">
    <property type="entry name" value="RHH_1"/>
    <property type="match status" value="1"/>
</dbReference>
<dbReference type="SUPFAM" id="SSF47598">
    <property type="entry name" value="Ribbon-helix-helix"/>
    <property type="match status" value="1"/>
</dbReference>
<protein>
    <recommendedName>
        <fullName>Antitoxin MazE6</fullName>
    </recommendedName>
</protein>